<dbReference type="EMBL" id="AE000511">
    <property type="protein sequence ID" value="AAD08257.1"/>
    <property type="molecule type" value="Genomic_DNA"/>
</dbReference>
<dbReference type="PIR" id="D64671">
    <property type="entry name" value="D64671"/>
</dbReference>
<dbReference type="RefSeq" id="NP_208004.1">
    <property type="nucleotide sequence ID" value="NC_000915.1"/>
</dbReference>
<dbReference type="RefSeq" id="WP_000669967.1">
    <property type="nucleotide sequence ID" value="NC_018939.1"/>
</dbReference>
<dbReference type="SMR" id="P56087"/>
<dbReference type="DIP" id="DIP-3478N"/>
<dbReference type="IntAct" id="P56087">
    <property type="interactions" value="1"/>
</dbReference>
<dbReference type="MINT" id="P56087"/>
<dbReference type="STRING" id="85962.HP_1212"/>
<dbReference type="PaxDb" id="85962-C694_06270"/>
<dbReference type="EnsemblBacteria" id="AAD08257">
    <property type="protein sequence ID" value="AAD08257"/>
    <property type="gene ID" value="HP_1212"/>
</dbReference>
<dbReference type="KEGG" id="heo:C694_06270"/>
<dbReference type="KEGG" id="hpy:HP_1212"/>
<dbReference type="PATRIC" id="fig|85962.47.peg.1302"/>
<dbReference type="eggNOG" id="COG0636">
    <property type="taxonomic scope" value="Bacteria"/>
</dbReference>
<dbReference type="InParanoid" id="P56087"/>
<dbReference type="OrthoDB" id="5339943at2"/>
<dbReference type="Proteomes" id="UP000000429">
    <property type="component" value="Chromosome"/>
</dbReference>
<dbReference type="GO" id="GO:0005886">
    <property type="term" value="C:plasma membrane"/>
    <property type="evidence" value="ECO:0007669"/>
    <property type="project" value="UniProtKB-SubCell"/>
</dbReference>
<dbReference type="GO" id="GO:0045259">
    <property type="term" value="C:proton-transporting ATP synthase complex"/>
    <property type="evidence" value="ECO:0007669"/>
    <property type="project" value="UniProtKB-KW"/>
</dbReference>
<dbReference type="GO" id="GO:0033177">
    <property type="term" value="C:proton-transporting two-sector ATPase complex, proton-transporting domain"/>
    <property type="evidence" value="ECO:0007669"/>
    <property type="project" value="InterPro"/>
</dbReference>
<dbReference type="GO" id="GO:0008289">
    <property type="term" value="F:lipid binding"/>
    <property type="evidence" value="ECO:0007669"/>
    <property type="project" value="UniProtKB-KW"/>
</dbReference>
<dbReference type="GO" id="GO:0046933">
    <property type="term" value="F:proton-transporting ATP synthase activity, rotational mechanism"/>
    <property type="evidence" value="ECO:0007669"/>
    <property type="project" value="UniProtKB-UniRule"/>
</dbReference>
<dbReference type="GO" id="GO:0015986">
    <property type="term" value="P:proton motive force-driven ATP synthesis"/>
    <property type="evidence" value="ECO:0000318"/>
    <property type="project" value="GO_Central"/>
</dbReference>
<dbReference type="CDD" id="cd18121">
    <property type="entry name" value="ATP-synt_Fo_c"/>
    <property type="match status" value="1"/>
</dbReference>
<dbReference type="Gene3D" id="1.20.20.10">
    <property type="entry name" value="F1F0 ATP synthase subunit C"/>
    <property type="match status" value="1"/>
</dbReference>
<dbReference type="HAMAP" id="MF_01396">
    <property type="entry name" value="ATP_synth_c_bact"/>
    <property type="match status" value="1"/>
</dbReference>
<dbReference type="InterPro" id="IPR000454">
    <property type="entry name" value="ATP_synth_F0_csu"/>
</dbReference>
<dbReference type="InterPro" id="IPR020537">
    <property type="entry name" value="ATP_synth_F0_csu_DDCD_BS"/>
</dbReference>
<dbReference type="InterPro" id="IPR038662">
    <property type="entry name" value="ATP_synth_F0_csu_sf"/>
</dbReference>
<dbReference type="InterPro" id="IPR002379">
    <property type="entry name" value="ATPase_proteolipid_c-like_dom"/>
</dbReference>
<dbReference type="InterPro" id="IPR035921">
    <property type="entry name" value="F/V-ATP_Csub_sf"/>
</dbReference>
<dbReference type="NCBIfam" id="NF006295">
    <property type="entry name" value="PRK08482.1"/>
    <property type="match status" value="1"/>
</dbReference>
<dbReference type="Pfam" id="PF00137">
    <property type="entry name" value="ATP-synt_C"/>
    <property type="match status" value="1"/>
</dbReference>
<dbReference type="PRINTS" id="PR00124">
    <property type="entry name" value="ATPASEC"/>
</dbReference>
<dbReference type="SUPFAM" id="SSF81333">
    <property type="entry name" value="F1F0 ATP synthase subunit C"/>
    <property type="match status" value="1"/>
</dbReference>
<dbReference type="PROSITE" id="PS00605">
    <property type="entry name" value="ATPASE_C"/>
    <property type="match status" value="1"/>
</dbReference>
<organism>
    <name type="scientific">Helicobacter pylori (strain ATCC 700392 / 26695)</name>
    <name type="common">Campylobacter pylori</name>
    <dbReference type="NCBI Taxonomy" id="85962"/>
    <lineage>
        <taxon>Bacteria</taxon>
        <taxon>Pseudomonadati</taxon>
        <taxon>Campylobacterota</taxon>
        <taxon>Epsilonproteobacteria</taxon>
        <taxon>Campylobacterales</taxon>
        <taxon>Helicobacteraceae</taxon>
        <taxon>Helicobacter</taxon>
    </lineage>
</organism>
<accession>P56087</accession>
<keyword id="KW-0066">ATP synthesis</keyword>
<keyword id="KW-0997">Cell inner membrane</keyword>
<keyword id="KW-1003">Cell membrane</keyword>
<keyword id="KW-0138">CF(0)</keyword>
<keyword id="KW-0375">Hydrogen ion transport</keyword>
<keyword id="KW-0406">Ion transport</keyword>
<keyword id="KW-0446">Lipid-binding</keyword>
<keyword id="KW-0472">Membrane</keyword>
<keyword id="KW-1185">Reference proteome</keyword>
<keyword id="KW-0812">Transmembrane</keyword>
<keyword id="KW-1133">Transmembrane helix</keyword>
<keyword id="KW-0813">Transport</keyword>
<gene>
    <name evidence="2" type="primary">atpE</name>
    <name type="ordered locus">HP_1212</name>
</gene>
<feature type="chain" id="PRO_0000112149" description="ATP synthase subunit c">
    <location>
        <begin position="1"/>
        <end position="105"/>
    </location>
</feature>
<feature type="transmembrane region" description="Helical" evidence="2">
    <location>
        <begin position="32"/>
        <end position="52"/>
    </location>
</feature>
<feature type="transmembrane region" description="Helical" evidence="2">
    <location>
        <begin position="78"/>
        <end position="98"/>
    </location>
</feature>
<feature type="site" description="Reversibly protonated during proton transport" evidence="2">
    <location>
        <position position="84"/>
    </location>
</feature>
<reference key="1">
    <citation type="journal article" date="1997" name="Nature">
        <title>The complete genome sequence of the gastric pathogen Helicobacter pylori.</title>
        <authorList>
            <person name="Tomb J.-F."/>
            <person name="White O."/>
            <person name="Kerlavage A.R."/>
            <person name="Clayton R.A."/>
            <person name="Sutton G.G."/>
            <person name="Fleischmann R.D."/>
            <person name="Ketchum K.A."/>
            <person name="Klenk H.-P."/>
            <person name="Gill S.R."/>
            <person name="Dougherty B.A."/>
            <person name="Nelson K.E."/>
            <person name="Quackenbush J."/>
            <person name="Zhou L."/>
            <person name="Kirkness E.F."/>
            <person name="Peterson S.N."/>
            <person name="Loftus B.J."/>
            <person name="Richardson D.L."/>
            <person name="Dodson R.J."/>
            <person name="Khalak H.G."/>
            <person name="Glodek A."/>
            <person name="McKenney K."/>
            <person name="FitzGerald L.M."/>
            <person name="Lee N."/>
            <person name="Adams M.D."/>
            <person name="Hickey E.K."/>
            <person name="Berg D.E."/>
            <person name="Gocayne J.D."/>
            <person name="Utterback T.R."/>
            <person name="Peterson J.D."/>
            <person name="Kelley J.M."/>
            <person name="Cotton M.D."/>
            <person name="Weidman J.F."/>
            <person name="Fujii C."/>
            <person name="Bowman C."/>
            <person name="Watthey L."/>
            <person name="Wallin E."/>
            <person name="Hayes W.S."/>
            <person name="Borodovsky M."/>
            <person name="Karp P.D."/>
            <person name="Smith H.O."/>
            <person name="Fraser C.M."/>
            <person name="Venter J.C."/>
        </authorList>
    </citation>
    <scope>NUCLEOTIDE SEQUENCE [LARGE SCALE GENOMIC DNA]</scope>
    <source>
        <strain>ATCC 700392 / 26695</strain>
    </source>
</reference>
<evidence type="ECO:0000250" key="1"/>
<evidence type="ECO:0000255" key="2">
    <source>
        <dbReference type="HAMAP-Rule" id="MF_01396"/>
    </source>
</evidence>
<name>ATPL_HELPY</name>
<comment type="function">
    <text evidence="2">F(1)F(0) ATP synthase produces ATP from ADP in the presence of a proton or sodium gradient. F-type ATPases consist of two structural domains, F(1) containing the extramembraneous catalytic core and F(0) containing the membrane proton channel, linked together by a central stalk and a peripheral stalk. During catalysis, ATP synthesis in the catalytic domain of F(1) is coupled via a rotary mechanism of the central stalk subunits to proton translocation.</text>
</comment>
<comment type="function">
    <text evidence="2">Key component of the F(0) channel; it plays a direct role in translocation across the membrane. A homomeric c-ring of between 10-14 subunits forms the central stalk rotor element with the F(1) delta and epsilon subunits.</text>
</comment>
<comment type="subunit">
    <text evidence="2">F-type ATPases have 2 components, F(1) - the catalytic core - and F(0) - the membrane proton channel. F(1) has five subunits: alpha(3), beta(3), gamma(1), delta(1), epsilon(1). F(0) has three main subunits: a(1), b(2) and c(10-14). The alpha and beta chains form an alternating ring which encloses part of the gamma chain. F(1) is attached to F(0) by a central stalk formed by the gamma and epsilon chains, while a peripheral stalk is formed by the delta and b chains.</text>
</comment>
<comment type="subcellular location">
    <subcellularLocation>
        <location evidence="2">Cell inner membrane</location>
        <topology evidence="2">Multi-pass membrane protein</topology>
    </subcellularLocation>
</comment>
<comment type="miscellaneous">
    <text evidence="1">Dicyclohexylcarbodiimide (DCDD) binding to the active glutamate residue inhibits ATPase in vitro.</text>
</comment>
<comment type="similarity">
    <text evidence="2">Belongs to the ATPase C chain family.</text>
</comment>
<protein>
    <recommendedName>
        <fullName evidence="2">ATP synthase subunit c</fullName>
    </recommendedName>
    <alternativeName>
        <fullName evidence="2">ATP synthase F(0) sector subunit c</fullName>
    </alternativeName>
    <alternativeName>
        <fullName evidence="2">F-type ATPase subunit c</fullName>
        <shortName evidence="2">F-ATPase subunit c</shortName>
    </alternativeName>
    <alternativeName>
        <fullName evidence="2">Lipid-binding protein</fullName>
    </alternativeName>
</protein>
<proteinExistence type="inferred from homology"/>
<sequence length="105" mass="10686">MKFLALFFLALVGVAFAHDGGMGGMDMIKSYSILGAMIGLGIAAFGGAIGMGNAAAATITGTARNPGVGGKLLTTMFVAMAMIEAQVIYTLVFAIIAIYSNPFLS</sequence>